<organism>
    <name type="scientific">Pyrobaculum aerophilum (strain ATCC 51768 / DSM 7523 / JCM 9630 / CIP 104966 / NBRC 100827 / IM2)</name>
    <dbReference type="NCBI Taxonomy" id="178306"/>
    <lineage>
        <taxon>Archaea</taxon>
        <taxon>Thermoproteota</taxon>
        <taxon>Thermoprotei</taxon>
        <taxon>Thermoproteales</taxon>
        <taxon>Thermoproteaceae</taxon>
        <taxon>Pyrobaculum</taxon>
    </lineage>
</organism>
<gene>
    <name evidence="1" type="primary">rps6e</name>
    <name type="ordered locus">PAE1505</name>
</gene>
<name>RS6E_PYRAE</name>
<dbReference type="EMBL" id="AE009441">
    <property type="protein sequence ID" value="AAL63524.1"/>
    <property type="molecule type" value="Genomic_DNA"/>
</dbReference>
<dbReference type="RefSeq" id="WP_011007997.1">
    <property type="nucleotide sequence ID" value="NC_003364.1"/>
</dbReference>
<dbReference type="SMR" id="Q8ZX25"/>
<dbReference type="STRING" id="178306.PAE1505"/>
<dbReference type="EnsemblBacteria" id="AAL63524">
    <property type="protein sequence ID" value="AAL63524"/>
    <property type="gene ID" value="PAE1505"/>
</dbReference>
<dbReference type="GeneID" id="1465766"/>
<dbReference type="KEGG" id="pai:PAE1505"/>
<dbReference type="PATRIC" id="fig|178306.9.peg.1111"/>
<dbReference type="eggNOG" id="arCOG01946">
    <property type="taxonomic scope" value="Archaea"/>
</dbReference>
<dbReference type="HOGENOM" id="CLU_109671_1_1_2"/>
<dbReference type="InParanoid" id="Q8ZX25"/>
<dbReference type="Proteomes" id="UP000002439">
    <property type="component" value="Chromosome"/>
</dbReference>
<dbReference type="GO" id="GO:1990904">
    <property type="term" value="C:ribonucleoprotein complex"/>
    <property type="evidence" value="ECO:0007669"/>
    <property type="project" value="UniProtKB-KW"/>
</dbReference>
<dbReference type="GO" id="GO:0005840">
    <property type="term" value="C:ribosome"/>
    <property type="evidence" value="ECO:0007669"/>
    <property type="project" value="UniProtKB-KW"/>
</dbReference>
<dbReference type="GO" id="GO:0003735">
    <property type="term" value="F:structural constituent of ribosome"/>
    <property type="evidence" value="ECO:0007669"/>
    <property type="project" value="InterPro"/>
</dbReference>
<dbReference type="GO" id="GO:0006412">
    <property type="term" value="P:translation"/>
    <property type="evidence" value="ECO:0007669"/>
    <property type="project" value="UniProtKB-UniRule"/>
</dbReference>
<dbReference type="HAMAP" id="MF_00512">
    <property type="entry name" value="Ribosomal_eS6"/>
    <property type="match status" value="1"/>
</dbReference>
<dbReference type="InterPro" id="IPR001377">
    <property type="entry name" value="Ribosomal_eS6"/>
</dbReference>
<dbReference type="InterPro" id="IPR020924">
    <property type="entry name" value="Ribosomal_eS6_arc"/>
</dbReference>
<dbReference type="InterPro" id="IPR018282">
    <property type="entry name" value="Ribosomal_eS6_CS"/>
</dbReference>
<dbReference type="NCBIfam" id="NF003293">
    <property type="entry name" value="PRK04290.1-2"/>
    <property type="match status" value="1"/>
</dbReference>
<dbReference type="PANTHER" id="PTHR11502">
    <property type="entry name" value="40S RIBOSOMAL PROTEIN S6"/>
    <property type="match status" value="1"/>
</dbReference>
<dbReference type="Pfam" id="PF01092">
    <property type="entry name" value="Ribosomal_S6e"/>
    <property type="match status" value="1"/>
</dbReference>
<dbReference type="SMART" id="SM01405">
    <property type="entry name" value="Ribosomal_S6e"/>
    <property type="match status" value="1"/>
</dbReference>
<dbReference type="PROSITE" id="PS00578">
    <property type="entry name" value="RIBOSOMAL_S6E"/>
    <property type="match status" value="1"/>
</dbReference>
<proteinExistence type="inferred from homology"/>
<protein>
    <recommendedName>
        <fullName evidence="1">Small ribosomal subunit protein eS6</fullName>
    </recommendedName>
    <alternativeName>
        <fullName evidence="2">30S ribosomal protein S6e</fullName>
    </alternativeName>
</protein>
<sequence length="148" mass="15950">MPTFKLVLSDPMSGKARQFEIKDPLAQRFIGLKIGDELDGVILKDLIELPKGAKIRITGGSGIEGAPMHPGVPGPVKKYILADGPPGYWPPKKGMKKKKLVRGNTISDSIVQINAVIVYPKDYTGPPAIPLGAKELEKEKKAEEAPAQ</sequence>
<feature type="chain" id="PRO_0000137356" description="Small ribosomal subunit protein eS6">
    <location>
        <begin position="1"/>
        <end position="148"/>
    </location>
</feature>
<accession>Q8ZX25</accession>
<reference key="1">
    <citation type="journal article" date="2002" name="Proc. Natl. Acad. Sci. U.S.A.">
        <title>Genome sequence of the hyperthermophilic crenarchaeon Pyrobaculum aerophilum.</title>
        <authorList>
            <person name="Fitz-Gibbon S.T."/>
            <person name="Ladner H."/>
            <person name="Kim U.-J."/>
            <person name="Stetter K.O."/>
            <person name="Simon M.I."/>
            <person name="Miller J.H."/>
        </authorList>
    </citation>
    <scope>NUCLEOTIDE SEQUENCE [LARGE SCALE GENOMIC DNA]</scope>
    <source>
        <strain>ATCC 51768 / DSM 7523 / JCM 9630 / CIP 104966 / NBRC 100827 / IM2</strain>
    </source>
</reference>
<comment type="similarity">
    <text evidence="1">Belongs to the eukaryotic ribosomal protein eS6 family.</text>
</comment>
<keyword id="KW-1185">Reference proteome</keyword>
<keyword id="KW-0687">Ribonucleoprotein</keyword>
<keyword id="KW-0689">Ribosomal protein</keyword>
<evidence type="ECO:0000255" key="1">
    <source>
        <dbReference type="HAMAP-Rule" id="MF_00512"/>
    </source>
</evidence>
<evidence type="ECO:0000305" key="2"/>